<gene>
    <name evidence="1" type="primary">rpmC</name>
    <name type="ordered locus">Sbal223_4048</name>
</gene>
<name>RL29_SHEB2</name>
<keyword id="KW-0687">Ribonucleoprotein</keyword>
<keyword id="KW-0689">Ribosomal protein</keyword>
<feature type="chain" id="PRO_1000194031" description="Large ribosomal subunit protein uL29">
    <location>
        <begin position="1"/>
        <end position="63"/>
    </location>
</feature>
<protein>
    <recommendedName>
        <fullName evidence="1">Large ribosomal subunit protein uL29</fullName>
    </recommendedName>
    <alternativeName>
        <fullName evidence="2">50S ribosomal protein L29</fullName>
    </alternativeName>
</protein>
<organism>
    <name type="scientific">Shewanella baltica (strain OS223)</name>
    <dbReference type="NCBI Taxonomy" id="407976"/>
    <lineage>
        <taxon>Bacteria</taxon>
        <taxon>Pseudomonadati</taxon>
        <taxon>Pseudomonadota</taxon>
        <taxon>Gammaproteobacteria</taxon>
        <taxon>Alteromonadales</taxon>
        <taxon>Shewanellaceae</taxon>
        <taxon>Shewanella</taxon>
    </lineage>
</organism>
<accession>B8EBJ7</accession>
<evidence type="ECO:0000255" key="1">
    <source>
        <dbReference type="HAMAP-Rule" id="MF_00374"/>
    </source>
</evidence>
<evidence type="ECO:0000305" key="2"/>
<comment type="similarity">
    <text evidence="1">Belongs to the universal ribosomal protein uL29 family.</text>
</comment>
<sequence length="63" mass="7147">MKASELREKSVEELNAELLGLLREQFNLRMQHATGQLTQTNQLKLVRRNIARVKTIITSKAGA</sequence>
<proteinExistence type="inferred from homology"/>
<dbReference type="EMBL" id="CP001252">
    <property type="protein sequence ID" value="ACK48521.1"/>
    <property type="molecule type" value="Genomic_DNA"/>
</dbReference>
<dbReference type="RefSeq" id="WP_006083592.1">
    <property type="nucleotide sequence ID" value="NC_011663.1"/>
</dbReference>
<dbReference type="SMR" id="B8EBJ7"/>
<dbReference type="GeneID" id="90572199"/>
<dbReference type="KEGG" id="sbp:Sbal223_4048"/>
<dbReference type="HOGENOM" id="CLU_158491_1_2_6"/>
<dbReference type="Proteomes" id="UP000002507">
    <property type="component" value="Chromosome"/>
</dbReference>
<dbReference type="GO" id="GO:0022625">
    <property type="term" value="C:cytosolic large ribosomal subunit"/>
    <property type="evidence" value="ECO:0007669"/>
    <property type="project" value="TreeGrafter"/>
</dbReference>
<dbReference type="GO" id="GO:0003735">
    <property type="term" value="F:structural constituent of ribosome"/>
    <property type="evidence" value="ECO:0007669"/>
    <property type="project" value="InterPro"/>
</dbReference>
<dbReference type="GO" id="GO:0006412">
    <property type="term" value="P:translation"/>
    <property type="evidence" value="ECO:0007669"/>
    <property type="project" value="UniProtKB-UniRule"/>
</dbReference>
<dbReference type="CDD" id="cd00427">
    <property type="entry name" value="Ribosomal_L29_HIP"/>
    <property type="match status" value="1"/>
</dbReference>
<dbReference type="FunFam" id="1.10.287.310:FF:000001">
    <property type="entry name" value="50S ribosomal protein L29"/>
    <property type="match status" value="1"/>
</dbReference>
<dbReference type="Gene3D" id="1.10.287.310">
    <property type="match status" value="1"/>
</dbReference>
<dbReference type="HAMAP" id="MF_00374">
    <property type="entry name" value="Ribosomal_uL29"/>
    <property type="match status" value="1"/>
</dbReference>
<dbReference type="InterPro" id="IPR050063">
    <property type="entry name" value="Ribosomal_protein_uL29"/>
</dbReference>
<dbReference type="InterPro" id="IPR001854">
    <property type="entry name" value="Ribosomal_uL29"/>
</dbReference>
<dbReference type="InterPro" id="IPR018254">
    <property type="entry name" value="Ribosomal_uL29_CS"/>
</dbReference>
<dbReference type="InterPro" id="IPR036049">
    <property type="entry name" value="Ribosomal_uL29_sf"/>
</dbReference>
<dbReference type="NCBIfam" id="TIGR00012">
    <property type="entry name" value="L29"/>
    <property type="match status" value="1"/>
</dbReference>
<dbReference type="PANTHER" id="PTHR10916">
    <property type="entry name" value="60S RIBOSOMAL PROTEIN L35/50S RIBOSOMAL PROTEIN L29"/>
    <property type="match status" value="1"/>
</dbReference>
<dbReference type="PANTHER" id="PTHR10916:SF0">
    <property type="entry name" value="LARGE RIBOSOMAL SUBUNIT PROTEIN UL29C"/>
    <property type="match status" value="1"/>
</dbReference>
<dbReference type="Pfam" id="PF00831">
    <property type="entry name" value="Ribosomal_L29"/>
    <property type="match status" value="1"/>
</dbReference>
<dbReference type="SUPFAM" id="SSF46561">
    <property type="entry name" value="Ribosomal protein L29 (L29p)"/>
    <property type="match status" value="1"/>
</dbReference>
<dbReference type="PROSITE" id="PS00579">
    <property type="entry name" value="RIBOSOMAL_L29"/>
    <property type="match status" value="1"/>
</dbReference>
<reference key="1">
    <citation type="submission" date="2008-12" db="EMBL/GenBank/DDBJ databases">
        <title>Complete sequence of chromosome of Shewanella baltica OS223.</title>
        <authorList>
            <consortium name="US DOE Joint Genome Institute"/>
            <person name="Lucas S."/>
            <person name="Copeland A."/>
            <person name="Lapidus A."/>
            <person name="Glavina del Rio T."/>
            <person name="Dalin E."/>
            <person name="Tice H."/>
            <person name="Bruce D."/>
            <person name="Goodwin L."/>
            <person name="Pitluck S."/>
            <person name="Chertkov O."/>
            <person name="Meincke L."/>
            <person name="Brettin T."/>
            <person name="Detter J.C."/>
            <person name="Han C."/>
            <person name="Kuske C.R."/>
            <person name="Larimer F."/>
            <person name="Land M."/>
            <person name="Hauser L."/>
            <person name="Kyrpides N."/>
            <person name="Ovchinnikova G."/>
            <person name="Brettar I."/>
            <person name="Rodrigues J."/>
            <person name="Konstantinidis K."/>
            <person name="Tiedje J."/>
        </authorList>
    </citation>
    <scope>NUCLEOTIDE SEQUENCE [LARGE SCALE GENOMIC DNA]</scope>
    <source>
        <strain>OS223</strain>
    </source>
</reference>